<reference key="1">
    <citation type="journal article" date="2008" name="J. Bacteriol.">
        <title>The genome sequence of the tomato-pathogenic actinomycete Clavibacter michiganensis subsp. michiganensis NCPPB382 reveals a large island involved in pathogenicity.</title>
        <authorList>
            <person name="Gartemann K.-H."/>
            <person name="Abt B."/>
            <person name="Bekel T."/>
            <person name="Burger A."/>
            <person name="Engemann J."/>
            <person name="Fluegel M."/>
            <person name="Gaigalat L."/>
            <person name="Goesmann A."/>
            <person name="Graefen I."/>
            <person name="Kalinowski J."/>
            <person name="Kaup O."/>
            <person name="Kirchner O."/>
            <person name="Krause L."/>
            <person name="Linke B."/>
            <person name="McHardy A."/>
            <person name="Meyer F."/>
            <person name="Pohle S."/>
            <person name="Rueckert C."/>
            <person name="Schneiker S."/>
            <person name="Zellermann E.-M."/>
            <person name="Puehler A."/>
            <person name="Eichenlaub R."/>
            <person name="Kaiser O."/>
            <person name="Bartels D."/>
        </authorList>
    </citation>
    <scope>NUCLEOTIDE SEQUENCE [LARGE SCALE GENOMIC DNA]</scope>
    <source>
        <strain>NCPPB 382</strain>
    </source>
</reference>
<name>RSMH_CLAM3</name>
<gene>
    <name evidence="1" type="primary">rsmH</name>
    <name type="synonym">mraW</name>
    <name type="ordered locus">CMM_1867</name>
</gene>
<comment type="function">
    <text evidence="1">Specifically methylates the N4 position of cytidine in position 1402 (C1402) of 16S rRNA.</text>
</comment>
<comment type="catalytic activity">
    <reaction evidence="1">
        <text>cytidine(1402) in 16S rRNA + S-adenosyl-L-methionine = N(4)-methylcytidine(1402) in 16S rRNA + S-adenosyl-L-homocysteine + H(+)</text>
        <dbReference type="Rhea" id="RHEA:42928"/>
        <dbReference type="Rhea" id="RHEA-COMP:10286"/>
        <dbReference type="Rhea" id="RHEA-COMP:10287"/>
        <dbReference type="ChEBI" id="CHEBI:15378"/>
        <dbReference type="ChEBI" id="CHEBI:57856"/>
        <dbReference type="ChEBI" id="CHEBI:59789"/>
        <dbReference type="ChEBI" id="CHEBI:74506"/>
        <dbReference type="ChEBI" id="CHEBI:82748"/>
        <dbReference type="EC" id="2.1.1.199"/>
    </reaction>
</comment>
<comment type="subcellular location">
    <subcellularLocation>
        <location evidence="1">Cytoplasm</location>
    </subcellularLocation>
</comment>
<comment type="similarity">
    <text evidence="1">Belongs to the methyltransferase superfamily. RsmH family.</text>
</comment>
<proteinExistence type="inferred from homology"/>
<organism>
    <name type="scientific">Clavibacter michiganensis subsp. michiganensis (strain NCPPB 382)</name>
    <dbReference type="NCBI Taxonomy" id="443906"/>
    <lineage>
        <taxon>Bacteria</taxon>
        <taxon>Bacillati</taxon>
        <taxon>Actinomycetota</taxon>
        <taxon>Actinomycetes</taxon>
        <taxon>Micrococcales</taxon>
        <taxon>Microbacteriaceae</taxon>
        <taxon>Clavibacter</taxon>
    </lineage>
</organism>
<accession>A5CS59</accession>
<keyword id="KW-0963">Cytoplasm</keyword>
<keyword id="KW-0489">Methyltransferase</keyword>
<keyword id="KW-0698">rRNA processing</keyword>
<keyword id="KW-0949">S-adenosyl-L-methionine</keyword>
<keyword id="KW-0808">Transferase</keyword>
<feature type="chain" id="PRO_0000386807" description="Ribosomal RNA small subunit methyltransferase H">
    <location>
        <begin position="1"/>
        <end position="318"/>
    </location>
</feature>
<feature type="binding site" evidence="1">
    <location>
        <begin position="38"/>
        <end position="40"/>
    </location>
    <ligand>
        <name>S-adenosyl-L-methionine</name>
        <dbReference type="ChEBI" id="CHEBI:59789"/>
    </ligand>
</feature>
<feature type="binding site" evidence="1">
    <location>
        <position position="57"/>
    </location>
    <ligand>
        <name>S-adenosyl-L-methionine</name>
        <dbReference type="ChEBI" id="CHEBI:59789"/>
    </ligand>
</feature>
<feature type="binding site" evidence="1">
    <location>
        <position position="91"/>
    </location>
    <ligand>
        <name>S-adenosyl-L-methionine</name>
        <dbReference type="ChEBI" id="CHEBI:59789"/>
    </ligand>
</feature>
<feature type="binding site" evidence="1">
    <location>
        <position position="105"/>
    </location>
    <ligand>
        <name>S-adenosyl-L-methionine</name>
        <dbReference type="ChEBI" id="CHEBI:59789"/>
    </ligand>
</feature>
<feature type="binding site" evidence="1">
    <location>
        <position position="112"/>
    </location>
    <ligand>
        <name>S-adenosyl-L-methionine</name>
        <dbReference type="ChEBI" id="CHEBI:59789"/>
    </ligand>
</feature>
<protein>
    <recommendedName>
        <fullName evidence="1">Ribosomal RNA small subunit methyltransferase H</fullName>
        <ecNumber evidence="1">2.1.1.199</ecNumber>
    </recommendedName>
    <alternativeName>
        <fullName evidence="1">16S rRNA m(4)C1402 methyltransferase</fullName>
    </alternativeName>
    <alternativeName>
        <fullName evidence="1">rRNA (cytosine-N(4)-)-methyltransferase RsmH</fullName>
    </alternativeName>
</protein>
<dbReference type="EC" id="2.1.1.199" evidence="1"/>
<dbReference type="EMBL" id="AM711867">
    <property type="protein sequence ID" value="CAN01923.1"/>
    <property type="molecule type" value="Genomic_DNA"/>
</dbReference>
<dbReference type="RefSeq" id="WP_012038554.1">
    <property type="nucleotide sequence ID" value="NC_009480.1"/>
</dbReference>
<dbReference type="SMR" id="A5CS59"/>
<dbReference type="KEGG" id="cmi:CMM_1867"/>
<dbReference type="eggNOG" id="COG0275">
    <property type="taxonomic scope" value="Bacteria"/>
</dbReference>
<dbReference type="HOGENOM" id="CLU_038422_0_0_11"/>
<dbReference type="OrthoDB" id="9806637at2"/>
<dbReference type="Proteomes" id="UP000001564">
    <property type="component" value="Chromosome"/>
</dbReference>
<dbReference type="GO" id="GO:0005737">
    <property type="term" value="C:cytoplasm"/>
    <property type="evidence" value="ECO:0007669"/>
    <property type="project" value="UniProtKB-SubCell"/>
</dbReference>
<dbReference type="GO" id="GO:0071424">
    <property type="term" value="F:rRNA (cytosine-N4-)-methyltransferase activity"/>
    <property type="evidence" value="ECO:0007669"/>
    <property type="project" value="UniProtKB-UniRule"/>
</dbReference>
<dbReference type="GO" id="GO:0070475">
    <property type="term" value="P:rRNA base methylation"/>
    <property type="evidence" value="ECO:0007669"/>
    <property type="project" value="UniProtKB-UniRule"/>
</dbReference>
<dbReference type="Gene3D" id="1.10.150.170">
    <property type="entry name" value="Putative methyltransferase TM0872, insert domain"/>
    <property type="match status" value="1"/>
</dbReference>
<dbReference type="Gene3D" id="3.40.50.150">
    <property type="entry name" value="Vaccinia Virus protein VP39"/>
    <property type="match status" value="1"/>
</dbReference>
<dbReference type="HAMAP" id="MF_01007">
    <property type="entry name" value="16SrRNA_methyltr_H"/>
    <property type="match status" value="1"/>
</dbReference>
<dbReference type="InterPro" id="IPR002903">
    <property type="entry name" value="RsmH"/>
</dbReference>
<dbReference type="InterPro" id="IPR023397">
    <property type="entry name" value="SAM-dep_MeTrfase_MraW_recog"/>
</dbReference>
<dbReference type="InterPro" id="IPR029063">
    <property type="entry name" value="SAM-dependent_MTases_sf"/>
</dbReference>
<dbReference type="NCBIfam" id="TIGR00006">
    <property type="entry name" value="16S rRNA (cytosine(1402)-N(4))-methyltransferase RsmH"/>
    <property type="match status" value="1"/>
</dbReference>
<dbReference type="PANTHER" id="PTHR11265:SF0">
    <property type="entry name" value="12S RRNA N4-METHYLCYTIDINE METHYLTRANSFERASE"/>
    <property type="match status" value="1"/>
</dbReference>
<dbReference type="PANTHER" id="PTHR11265">
    <property type="entry name" value="S-ADENOSYL-METHYLTRANSFERASE MRAW"/>
    <property type="match status" value="1"/>
</dbReference>
<dbReference type="Pfam" id="PF01795">
    <property type="entry name" value="Methyltransf_5"/>
    <property type="match status" value="1"/>
</dbReference>
<dbReference type="PIRSF" id="PIRSF004486">
    <property type="entry name" value="MraW"/>
    <property type="match status" value="1"/>
</dbReference>
<dbReference type="SUPFAM" id="SSF81799">
    <property type="entry name" value="Putative methyltransferase TM0872, insert domain"/>
    <property type="match status" value="1"/>
</dbReference>
<dbReference type="SUPFAM" id="SSF53335">
    <property type="entry name" value="S-adenosyl-L-methionine-dependent methyltransferases"/>
    <property type="match status" value="1"/>
</dbReference>
<sequence>MALDDIHTPVLLERCLELLAPALQGEGAVLVDATLGMAGHSEAFLDALPGLRLVGLDRDPDALAIAGERLARFGDRVNLVHTVYDGIGRALDGLGIGEVQGVFFDLGVSSLQLDRVERGFSYSQDAPLDMRMDGTAGLTAAQVVAEYDELELRRIFYDYGEEKLAPRYASRIVQAREVEPITTSARLVEIIQQATPAAVQRAGHPAKRVFQALRIEVNQELSVLARAMPAAVDRLAVGGRVVVESYQSLEDRIVKRELRARSTSTAPVGLPVELPEHRPELKLLVRGAELADQHEIAQNPRAASVRLRAAERARRRHA</sequence>
<evidence type="ECO:0000255" key="1">
    <source>
        <dbReference type="HAMAP-Rule" id="MF_01007"/>
    </source>
</evidence>